<feature type="initiator methionine" description="Removed" evidence="1">
    <location>
        <position position="1"/>
    </location>
</feature>
<feature type="chain" id="PRO_0000126436" description="Small ribosomal subunit protein uS8">
    <location>
        <begin position="2"/>
        <end position="133"/>
    </location>
</feature>
<comment type="function">
    <text evidence="2">One of the primary rRNA binding proteins, it binds directly to 16S rRNA central domain where it helps coordinate assembly of the platform of the 30S subunit.</text>
</comment>
<comment type="subunit">
    <text evidence="2">Part of the 30S ribosomal subunit. Contacts proteins S5 and S12.</text>
</comment>
<comment type="similarity">
    <text evidence="2">Belongs to the universal ribosomal protein uS8 family.</text>
</comment>
<keyword id="KW-0687">Ribonucleoprotein</keyword>
<keyword id="KW-0689">Ribosomal protein</keyword>
<keyword id="KW-0694">RNA-binding</keyword>
<keyword id="KW-0699">rRNA-binding</keyword>
<gene>
    <name evidence="2" type="primary">rpsH</name>
</gene>
<evidence type="ECO:0000250" key="1"/>
<evidence type="ECO:0000255" key="2">
    <source>
        <dbReference type="HAMAP-Rule" id="MF_01302"/>
    </source>
</evidence>
<evidence type="ECO:0000305" key="3"/>
<protein>
    <recommendedName>
        <fullName evidence="2">Small ribosomal subunit protein uS8</fullName>
    </recommendedName>
    <alternativeName>
        <fullName evidence="3">30S ribosomal protein S8</fullName>
    </alternativeName>
</protein>
<dbReference type="EMBL" id="X17524">
    <property type="protein sequence ID" value="CAA35561.1"/>
    <property type="molecule type" value="Genomic_DNA"/>
</dbReference>
<dbReference type="PIR" id="S29885">
    <property type="entry name" value="S29885"/>
</dbReference>
<dbReference type="SMR" id="P33106"/>
<dbReference type="STRING" id="1232675.GCA_000309825_02144"/>
<dbReference type="GO" id="GO:1990904">
    <property type="term" value="C:ribonucleoprotein complex"/>
    <property type="evidence" value="ECO:0007669"/>
    <property type="project" value="UniProtKB-KW"/>
</dbReference>
<dbReference type="GO" id="GO:0005840">
    <property type="term" value="C:ribosome"/>
    <property type="evidence" value="ECO:0007669"/>
    <property type="project" value="UniProtKB-KW"/>
</dbReference>
<dbReference type="GO" id="GO:0019843">
    <property type="term" value="F:rRNA binding"/>
    <property type="evidence" value="ECO:0007669"/>
    <property type="project" value="UniProtKB-UniRule"/>
</dbReference>
<dbReference type="GO" id="GO:0003735">
    <property type="term" value="F:structural constituent of ribosome"/>
    <property type="evidence" value="ECO:0007669"/>
    <property type="project" value="InterPro"/>
</dbReference>
<dbReference type="GO" id="GO:0006412">
    <property type="term" value="P:translation"/>
    <property type="evidence" value="ECO:0007669"/>
    <property type="project" value="UniProtKB-UniRule"/>
</dbReference>
<dbReference type="FunFam" id="3.30.1370.30:FF:000002">
    <property type="entry name" value="30S ribosomal protein S8"/>
    <property type="match status" value="1"/>
</dbReference>
<dbReference type="FunFam" id="3.30.1490.10:FF:000001">
    <property type="entry name" value="30S ribosomal protein S8"/>
    <property type="match status" value="1"/>
</dbReference>
<dbReference type="Gene3D" id="3.30.1370.30">
    <property type="match status" value="1"/>
</dbReference>
<dbReference type="Gene3D" id="3.30.1490.10">
    <property type="match status" value="1"/>
</dbReference>
<dbReference type="HAMAP" id="MF_01302_B">
    <property type="entry name" value="Ribosomal_uS8_B"/>
    <property type="match status" value="1"/>
</dbReference>
<dbReference type="InterPro" id="IPR000630">
    <property type="entry name" value="Ribosomal_uS8"/>
</dbReference>
<dbReference type="InterPro" id="IPR047863">
    <property type="entry name" value="Ribosomal_uS8_CS"/>
</dbReference>
<dbReference type="InterPro" id="IPR035987">
    <property type="entry name" value="Ribosomal_uS8_sf"/>
</dbReference>
<dbReference type="NCBIfam" id="NF001109">
    <property type="entry name" value="PRK00136.1"/>
    <property type="match status" value="1"/>
</dbReference>
<dbReference type="PANTHER" id="PTHR11758">
    <property type="entry name" value="40S RIBOSOMAL PROTEIN S15A"/>
    <property type="match status" value="1"/>
</dbReference>
<dbReference type="Pfam" id="PF00410">
    <property type="entry name" value="Ribosomal_S8"/>
    <property type="match status" value="1"/>
</dbReference>
<dbReference type="SUPFAM" id="SSF56047">
    <property type="entry name" value="Ribosomal protein S8"/>
    <property type="match status" value="1"/>
</dbReference>
<dbReference type="PROSITE" id="PS00053">
    <property type="entry name" value="RIBOSOMAL_S8"/>
    <property type="match status" value="1"/>
</dbReference>
<accession>P33106</accession>
<sequence>MTMTDPVADMLTRLRNANSAYHDTVSMPSSKLKTRVAEILKAEGYIQDWREEEAEVGKKLTIDLKFGPQRERAIAGLRRISKPGLRVYAKSTNLPHVLGGLGIAILSTSSGLLTNQQAAKKAGVGGEVLAYVW</sequence>
<name>RS8_MICLU</name>
<reference key="1">
    <citation type="journal article" date="1989" name="J. Mol. Evol.">
        <title>Spectinomycin operon of Micrococcus luteus: evolutionary implications of organization and novel codon usage.</title>
        <authorList>
            <person name="Ohama T."/>
            <person name="Muto A."/>
            <person name="Osawa S."/>
        </authorList>
    </citation>
    <scope>NUCLEOTIDE SEQUENCE [GENOMIC DNA]</scope>
</reference>
<proteinExistence type="inferred from homology"/>
<organism>
    <name type="scientific">Micrococcus luteus</name>
    <name type="common">Micrococcus lysodeikticus</name>
    <dbReference type="NCBI Taxonomy" id="1270"/>
    <lineage>
        <taxon>Bacteria</taxon>
        <taxon>Bacillati</taxon>
        <taxon>Actinomycetota</taxon>
        <taxon>Actinomycetes</taxon>
        <taxon>Micrococcales</taxon>
        <taxon>Micrococcaceae</taxon>
        <taxon>Micrococcus</taxon>
    </lineage>
</organism>